<dbReference type="EC" id="3.4.16.-"/>
<dbReference type="EMBL" id="AC006423">
    <property type="protein sequence ID" value="AAF63101.1"/>
    <property type="molecule type" value="Genomic_DNA"/>
</dbReference>
<dbReference type="EMBL" id="CP002684">
    <property type="protein sequence ID" value="AEE31996.1"/>
    <property type="molecule type" value="Genomic_DNA"/>
</dbReference>
<dbReference type="PIR" id="G96501">
    <property type="entry name" value="G96501"/>
</dbReference>
<dbReference type="RefSeq" id="NP_175046.1">
    <property type="nucleotide sequence ID" value="NM_103506.1"/>
</dbReference>
<dbReference type="SMR" id="Q9MAR8"/>
<dbReference type="ESTHER" id="arath-SCP44">
    <property type="family name" value="Carboxypeptidase_S10"/>
</dbReference>
<dbReference type="MEROPS" id="S10.A25"/>
<dbReference type="GlyCosmos" id="Q9MAR8">
    <property type="glycosylation" value="4 sites, No reported glycans"/>
</dbReference>
<dbReference type="GlyGen" id="Q9MAR8">
    <property type="glycosylation" value="4 sites"/>
</dbReference>
<dbReference type="PaxDb" id="3702-AT1G43780.1"/>
<dbReference type="ProteomicsDB" id="232962"/>
<dbReference type="EnsemblPlants" id="AT1G43780.1">
    <property type="protein sequence ID" value="AT1G43780.1"/>
    <property type="gene ID" value="AT1G43780"/>
</dbReference>
<dbReference type="GeneID" id="840974"/>
<dbReference type="Gramene" id="AT1G43780.1">
    <property type="protein sequence ID" value="AT1G43780.1"/>
    <property type="gene ID" value="AT1G43780"/>
</dbReference>
<dbReference type="KEGG" id="ath:AT1G43780"/>
<dbReference type="Araport" id="AT1G43780"/>
<dbReference type="TAIR" id="AT1G43780">
    <property type="gene designation" value="SCPL44"/>
</dbReference>
<dbReference type="eggNOG" id="KOG1282">
    <property type="taxonomic scope" value="Eukaryota"/>
</dbReference>
<dbReference type="HOGENOM" id="CLU_008523_13_1_1"/>
<dbReference type="InParanoid" id="Q9MAR8"/>
<dbReference type="OMA" id="KMGTKMS"/>
<dbReference type="PhylomeDB" id="Q9MAR8"/>
<dbReference type="PRO" id="PR:Q9MAR8"/>
<dbReference type="Proteomes" id="UP000006548">
    <property type="component" value="Chromosome 1"/>
</dbReference>
<dbReference type="ExpressionAtlas" id="Q9MAR8">
    <property type="expression patterns" value="baseline and differential"/>
</dbReference>
<dbReference type="GO" id="GO:0005576">
    <property type="term" value="C:extracellular region"/>
    <property type="evidence" value="ECO:0007669"/>
    <property type="project" value="UniProtKB-SubCell"/>
</dbReference>
<dbReference type="GO" id="GO:0004185">
    <property type="term" value="F:serine-type carboxypeptidase activity"/>
    <property type="evidence" value="ECO:0007669"/>
    <property type="project" value="InterPro"/>
</dbReference>
<dbReference type="GO" id="GO:0006508">
    <property type="term" value="P:proteolysis"/>
    <property type="evidence" value="ECO:0007669"/>
    <property type="project" value="UniProtKB-KW"/>
</dbReference>
<dbReference type="FunFam" id="3.40.50.11320:FF:000005">
    <property type="entry name" value="Carboxypeptidase"/>
    <property type="match status" value="1"/>
</dbReference>
<dbReference type="FunFam" id="3.40.50.1820:FF:000030">
    <property type="entry name" value="Carboxypeptidase"/>
    <property type="match status" value="1"/>
</dbReference>
<dbReference type="Gene3D" id="3.40.50.11320">
    <property type="match status" value="1"/>
</dbReference>
<dbReference type="Gene3D" id="6.10.250.940">
    <property type="match status" value="1"/>
</dbReference>
<dbReference type="Gene3D" id="3.40.50.1820">
    <property type="entry name" value="alpha/beta hydrolase"/>
    <property type="match status" value="1"/>
</dbReference>
<dbReference type="InterPro" id="IPR029058">
    <property type="entry name" value="AB_hydrolase_fold"/>
</dbReference>
<dbReference type="InterPro" id="IPR001563">
    <property type="entry name" value="Peptidase_S10"/>
</dbReference>
<dbReference type="InterPro" id="IPR018202">
    <property type="entry name" value="Ser_caboxypep_ser_AS"/>
</dbReference>
<dbReference type="PANTHER" id="PTHR11802:SF465">
    <property type="entry name" value="SERINE CARBOXYPEPTIDASE-LIKE 44"/>
    <property type="match status" value="1"/>
</dbReference>
<dbReference type="PANTHER" id="PTHR11802">
    <property type="entry name" value="SERINE PROTEASE FAMILY S10 SERINE CARBOXYPEPTIDASE"/>
    <property type="match status" value="1"/>
</dbReference>
<dbReference type="Pfam" id="PF00450">
    <property type="entry name" value="Peptidase_S10"/>
    <property type="match status" value="1"/>
</dbReference>
<dbReference type="PRINTS" id="PR00724">
    <property type="entry name" value="CRBOXYPTASEC"/>
</dbReference>
<dbReference type="SUPFAM" id="SSF53474">
    <property type="entry name" value="alpha/beta-Hydrolases"/>
    <property type="match status" value="1"/>
</dbReference>
<dbReference type="PROSITE" id="PS00131">
    <property type="entry name" value="CARBOXYPEPT_SER_SER"/>
    <property type="match status" value="1"/>
</dbReference>
<comment type="function">
    <text evidence="1">Probable carboxypeptidase.</text>
</comment>
<comment type="subcellular location">
    <subcellularLocation>
        <location evidence="5">Secreted</location>
    </subcellularLocation>
</comment>
<comment type="tissue specificity">
    <text evidence="4">Expressed in seedlings.</text>
</comment>
<comment type="similarity">
    <text evidence="5">Belongs to the peptidase S10 family.</text>
</comment>
<proteinExistence type="evidence at transcript level"/>
<reference key="1">
    <citation type="journal article" date="2000" name="Nature">
        <title>Sequence and analysis of chromosome 1 of the plant Arabidopsis thaliana.</title>
        <authorList>
            <person name="Theologis A."/>
            <person name="Ecker J.R."/>
            <person name="Palm C.J."/>
            <person name="Federspiel N.A."/>
            <person name="Kaul S."/>
            <person name="White O."/>
            <person name="Alonso J."/>
            <person name="Altafi H."/>
            <person name="Araujo R."/>
            <person name="Bowman C.L."/>
            <person name="Brooks S.Y."/>
            <person name="Buehler E."/>
            <person name="Chan A."/>
            <person name="Chao Q."/>
            <person name="Chen H."/>
            <person name="Cheuk R.F."/>
            <person name="Chin C.W."/>
            <person name="Chung M.K."/>
            <person name="Conn L."/>
            <person name="Conway A.B."/>
            <person name="Conway A.R."/>
            <person name="Creasy T.H."/>
            <person name="Dewar K."/>
            <person name="Dunn P."/>
            <person name="Etgu P."/>
            <person name="Feldblyum T.V."/>
            <person name="Feng J.-D."/>
            <person name="Fong B."/>
            <person name="Fujii C.Y."/>
            <person name="Gill J.E."/>
            <person name="Goldsmith A.D."/>
            <person name="Haas B."/>
            <person name="Hansen N.F."/>
            <person name="Hughes B."/>
            <person name="Huizar L."/>
            <person name="Hunter J.L."/>
            <person name="Jenkins J."/>
            <person name="Johnson-Hopson C."/>
            <person name="Khan S."/>
            <person name="Khaykin E."/>
            <person name="Kim C.J."/>
            <person name="Koo H.L."/>
            <person name="Kremenetskaia I."/>
            <person name="Kurtz D.B."/>
            <person name="Kwan A."/>
            <person name="Lam B."/>
            <person name="Langin-Hooper S."/>
            <person name="Lee A."/>
            <person name="Lee J.M."/>
            <person name="Lenz C.A."/>
            <person name="Li J.H."/>
            <person name="Li Y.-P."/>
            <person name="Lin X."/>
            <person name="Liu S.X."/>
            <person name="Liu Z.A."/>
            <person name="Luros J.S."/>
            <person name="Maiti R."/>
            <person name="Marziali A."/>
            <person name="Militscher J."/>
            <person name="Miranda M."/>
            <person name="Nguyen M."/>
            <person name="Nierman W.C."/>
            <person name="Osborne B.I."/>
            <person name="Pai G."/>
            <person name="Peterson J."/>
            <person name="Pham P.K."/>
            <person name="Rizzo M."/>
            <person name="Rooney T."/>
            <person name="Rowley D."/>
            <person name="Sakano H."/>
            <person name="Salzberg S.L."/>
            <person name="Schwartz J.R."/>
            <person name="Shinn P."/>
            <person name="Southwick A.M."/>
            <person name="Sun H."/>
            <person name="Tallon L.J."/>
            <person name="Tambunga G."/>
            <person name="Toriumi M.J."/>
            <person name="Town C.D."/>
            <person name="Utterback T."/>
            <person name="Van Aken S."/>
            <person name="Vaysberg M."/>
            <person name="Vysotskaia V.S."/>
            <person name="Walker M."/>
            <person name="Wu D."/>
            <person name="Yu G."/>
            <person name="Fraser C.M."/>
            <person name="Venter J.C."/>
            <person name="Davis R.W."/>
        </authorList>
    </citation>
    <scope>NUCLEOTIDE SEQUENCE [LARGE SCALE GENOMIC DNA]</scope>
    <source>
        <strain>cv. Columbia</strain>
    </source>
</reference>
<reference key="2">
    <citation type="journal article" date="2017" name="Plant J.">
        <title>Araport11: a complete reannotation of the Arabidopsis thaliana reference genome.</title>
        <authorList>
            <person name="Cheng C.Y."/>
            <person name="Krishnakumar V."/>
            <person name="Chan A.P."/>
            <person name="Thibaud-Nissen F."/>
            <person name="Schobel S."/>
            <person name="Town C.D."/>
        </authorList>
    </citation>
    <scope>GENOME REANNOTATION</scope>
    <source>
        <strain>cv. Columbia</strain>
    </source>
</reference>
<reference key="3">
    <citation type="journal article" date="2005" name="Plant Physiol.">
        <title>An expression and bioinformatics analysis of the Arabidopsis serine carboxypeptidase-like gene family.</title>
        <authorList>
            <person name="Fraser C.M."/>
            <person name="Rider L.W."/>
            <person name="Chapple C."/>
        </authorList>
    </citation>
    <scope>GENE FAMILY</scope>
    <scope>TISSUE SPECIFICITY</scope>
    <scope>NOMENCLATURE</scope>
</reference>
<protein>
    <recommendedName>
        <fullName>Serine carboxypeptidase-like 44</fullName>
        <ecNumber>3.4.16.-</ecNumber>
    </recommendedName>
</protein>
<name>SCP44_ARATH</name>
<gene>
    <name type="primary">SCPL44</name>
    <name type="ordered locus">At1g43780</name>
    <name type="ORF">F28H19.3</name>
    <name type="ORF">F28H19.5</name>
</gene>
<keyword id="KW-0121">Carboxypeptidase</keyword>
<keyword id="KW-1015">Disulfide bond</keyword>
<keyword id="KW-0325">Glycoprotein</keyword>
<keyword id="KW-0378">Hydrolase</keyword>
<keyword id="KW-0645">Protease</keyword>
<keyword id="KW-1185">Reference proteome</keyword>
<keyword id="KW-0964">Secreted</keyword>
<keyword id="KW-0732">Signal</keyword>
<feature type="signal peptide" evidence="2">
    <location>
        <begin position="1"/>
        <end position="22"/>
    </location>
</feature>
<feature type="chain" id="PRO_0000274659" description="Serine carboxypeptidase-like 44">
    <location>
        <begin position="23"/>
        <end position="479"/>
    </location>
</feature>
<feature type="active site" evidence="3">
    <location>
        <position position="184"/>
    </location>
</feature>
<feature type="active site" evidence="3">
    <location>
        <position position="389"/>
    </location>
</feature>
<feature type="active site" evidence="3">
    <location>
        <position position="446"/>
    </location>
</feature>
<feature type="glycosylation site" description="N-linked (GlcNAc...) asparagine" evidence="2">
    <location>
        <position position="143"/>
    </location>
</feature>
<feature type="glycosylation site" description="N-linked (GlcNAc...) asparagine" evidence="2">
    <location>
        <position position="265"/>
    </location>
</feature>
<feature type="glycosylation site" description="N-linked (GlcNAc...) asparagine" evidence="2">
    <location>
        <position position="341"/>
    </location>
</feature>
<feature type="glycosylation site" description="N-linked (GlcNAc...) asparagine" evidence="2">
    <location>
        <position position="411"/>
    </location>
</feature>
<feature type="disulfide bond" evidence="1">
    <location>
        <begin position="92"/>
        <end position="352"/>
    </location>
</feature>
<feature type="disulfide bond" evidence="1">
    <location>
        <begin position="253"/>
        <end position="270"/>
    </location>
</feature>
<feature type="disulfide bond" evidence="1">
    <location>
        <begin position="295"/>
        <end position="320"/>
    </location>
</feature>
<sequence length="479" mass="53923">MVGGKWRFLEVAVVVMVLQWSCDYNGNLAEGFPVQDLVTKLPGQPEVAFRQFAGYVDIDVKAGRSLFYYFVEAEKQPHSKPLTLWLNGGPGCSSIGGGAFTELGPFYPTGDARGLRRNPKSWNKASNLLFVDSPAGVGWSYSNTTSDYTTGDESTAKDMLVFMLRWLEKFPQFKTRNLFLAGESYAGHYVPQLADVILEYNAQRSNRFKFNLKGIAIGNPLLKLDRDVPAIYEFFWSHGMISDELGLTIMNQCDFEDYTFTDSHNISKLCEAAVNQAGTIITQYVNYYDILLDVCYPSLFEQELRLKKMGTRMSFGVDVCMSFEEQLYLNLPEVQKALHANRTKLPYEWSMCSSLLNYKYTDGNANMLPILKRIVKSKVPVWVFSGDEDSVIPLLGSRTLVKELADDLNFNTTVPYGAWFDKGQVGGWVVEYGNLLTFATVRGAAHMVPYSQPSRALHLFTSFVLGRKLPHKSPPALHD</sequence>
<evidence type="ECO:0000250" key="1"/>
<evidence type="ECO:0000255" key="2"/>
<evidence type="ECO:0000255" key="3">
    <source>
        <dbReference type="PROSITE-ProRule" id="PRU10074"/>
    </source>
</evidence>
<evidence type="ECO:0000269" key="4">
    <source>
    </source>
</evidence>
<evidence type="ECO:0000305" key="5"/>
<accession>Q9MAR8</accession>
<organism>
    <name type="scientific">Arabidopsis thaliana</name>
    <name type="common">Mouse-ear cress</name>
    <dbReference type="NCBI Taxonomy" id="3702"/>
    <lineage>
        <taxon>Eukaryota</taxon>
        <taxon>Viridiplantae</taxon>
        <taxon>Streptophyta</taxon>
        <taxon>Embryophyta</taxon>
        <taxon>Tracheophyta</taxon>
        <taxon>Spermatophyta</taxon>
        <taxon>Magnoliopsida</taxon>
        <taxon>eudicotyledons</taxon>
        <taxon>Gunneridae</taxon>
        <taxon>Pentapetalae</taxon>
        <taxon>rosids</taxon>
        <taxon>malvids</taxon>
        <taxon>Brassicales</taxon>
        <taxon>Brassicaceae</taxon>
        <taxon>Camelineae</taxon>
        <taxon>Arabidopsis</taxon>
    </lineage>
</organism>